<gene>
    <name type="primary">trz2</name>
    <name type="ORF">SPBC3D6.03c</name>
</gene>
<comment type="function">
    <text evidence="3">Zinc phosphodiesterase, which displays some tRNA 3'-processing endonuclease activity. May be involved in tRNA maturation, by removing a 3'-trailer from precursor tRNA.</text>
</comment>
<comment type="catalytic activity">
    <reaction>
        <text>Endonucleolytic cleavage of RNA, removing extra 3' nucleotides from tRNA precursor, generating 3' termini of tRNAs. A 3'-hydroxy group is left at the tRNA terminus and a 5'-phosphoryl group is left at the trailer molecule.</text>
        <dbReference type="EC" id="3.1.26.11"/>
    </reaction>
</comment>
<comment type="cofactor">
    <cofactor evidence="4">
        <name>Zn(2+)</name>
        <dbReference type="ChEBI" id="CHEBI:29105"/>
    </cofactor>
</comment>
<comment type="subcellular location">
    <subcellularLocation>
        <location evidence="3">Mitochondrion</location>
    </subcellularLocation>
    <subcellularLocation>
        <location evidence="2">Cytoplasm</location>
    </subcellularLocation>
</comment>
<comment type="similarity">
    <text evidence="4">Belongs to the RNase Z family.</text>
</comment>
<evidence type="ECO:0000255" key="1"/>
<evidence type="ECO:0000269" key="2">
    <source>
    </source>
</evidence>
<evidence type="ECO:0000269" key="3">
    <source>
    </source>
</evidence>
<evidence type="ECO:0000305" key="4"/>
<organism>
    <name type="scientific">Schizosaccharomyces pombe (strain 972 / ATCC 24843)</name>
    <name type="common">Fission yeast</name>
    <dbReference type="NCBI Taxonomy" id="284812"/>
    <lineage>
        <taxon>Eukaryota</taxon>
        <taxon>Fungi</taxon>
        <taxon>Dikarya</taxon>
        <taxon>Ascomycota</taxon>
        <taxon>Taphrinomycotina</taxon>
        <taxon>Schizosaccharomycetes</taxon>
        <taxon>Schizosaccharomycetales</taxon>
        <taxon>Schizosaccharomycetaceae</taxon>
        <taxon>Schizosaccharomyces</taxon>
    </lineage>
</organism>
<accession>P87168</accession>
<feature type="transit peptide" description="Mitochondrion" evidence="1">
    <location>
        <begin position="1"/>
        <end position="37"/>
    </location>
</feature>
<feature type="chain" id="PRO_0000315962" description="Ribonuclease Z 2, mitochondrial">
    <location>
        <begin position="38"/>
        <end position="678"/>
    </location>
</feature>
<name>RNZ2_SCHPO</name>
<reference key="1">
    <citation type="journal article" date="2002" name="Nature">
        <title>The genome sequence of Schizosaccharomyces pombe.</title>
        <authorList>
            <person name="Wood V."/>
            <person name="Gwilliam R."/>
            <person name="Rajandream M.A."/>
            <person name="Lyne M.H."/>
            <person name="Lyne R."/>
            <person name="Stewart A."/>
            <person name="Sgouros J.G."/>
            <person name="Peat N."/>
            <person name="Hayles J."/>
            <person name="Baker S.G."/>
            <person name="Basham D."/>
            <person name="Bowman S."/>
            <person name="Brooks K."/>
            <person name="Brown D."/>
            <person name="Brown S."/>
            <person name="Chillingworth T."/>
            <person name="Churcher C.M."/>
            <person name="Collins M."/>
            <person name="Connor R."/>
            <person name="Cronin A."/>
            <person name="Davis P."/>
            <person name="Feltwell T."/>
            <person name="Fraser A."/>
            <person name="Gentles S."/>
            <person name="Goble A."/>
            <person name="Hamlin N."/>
            <person name="Harris D.E."/>
            <person name="Hidalgo J."/>
            <person name="Hodgson G."/>
            <person name="Holroyd S."/>
            <person name="Hornsby T."/>
            <person name="Howarth S."/>
            <person name="Huckle E.J."/>
            <person name="Hunt S."/>
            <person name="Jagels K."/>
            <person name="James K.D."/>
            <person name="Jones L."/>
            <person name="Jones M."/>
            <person name="Leather S."/>
            <person name="McDonald S."/>
            <person name="McLean J."/>
            <person name="Mooney P."/>
            <person name="Moule S."/>
            <person name="Mungall K.L."/>
            <person name="Murphy L.D."/>
            <person name="Niblett D."/>
            <person name="Odell C."/>
            <person name="Oliver K."/>
            <person name="O'Neil S."/>
            <person name="Pearson D."/>
            <person name="Quail M.A."/>
            <person name="Rabbinowitsch E."/>
            <person name="Rutherford K.M."/>
            <person name="Rutter S."/>
            <person name="Saunders D."/>
            <person name="Seeger K."/>
            <person name="Sharp S."/>
            <person name="Skelton J."/>
            <person name="Simmonds M.N."/>
            <person name="Squares R."/>
            <person name="Squares S."/>
            <person name="Stevens K."/>
            <person name="Taylor K."/>
            <person name="Taylor R.G."/>
            <person name="Tivey A."/>
            <person name="Walsh S.V."/>
            <person name="Warren T."/>
            <person name="Whitehead S."/>
            <person name="Woodward J.R."/>
            <person name="Volckaert G."/>
            <person name="Aert R."/>
            <person name="Robben J."/>
            <person name="Grymonprez B."/>
            <person name="Weltjens I."/>
            <person name="Vanstreels E."/>
            <person name="Rieger M."/>
            <person name="Schaefer M."/>
            <person name="Mueller-Auer S."/>
            <person name="Gabel C."/>
            <person name="Fuchs M."/>
            <person name="Duesterhoeft A."/>
            <person name="Fritzc C."/>
            <person name="Holzer E."/>
            <person name="Moestl D."/>
            <person name="Hilbert H."/>
            <person name="Borzym K."/>
            <person name="Langer I."/>
            <person name="Beck A."/>
            <person name="Lehrach H."/>
            <person name="Reinhardt R."/>
            <person name="Pohl T.M."/>
            <person name="Eger P."/>
            <person name="Zimmermann W."/>
            <person name="Wedler H."/>
            <person name="Wambutt R."/>
            <person name="Purnelle B."/>
            <person name="Goffeau A."/>
            <person name="Cadieu E."/>
            <person name="Dreano S."/>
            <person name="Gloux S."/>
            <person name="Lelaure V."/>
            <person name="Mottier S."/>
            <person name="Galibert F."/>
            <person name="Aves S.J."/>
            <person name="Xiang Z."/>
            <person name="Hunt C."/>
            <person name="Moore K."/>
            <person name="Hurst S.M."/>
            <person name="Lucas M."/>
            <person name="Rochet M."/>
            <person name="Gaillardin C."/>
            <person name="Tallada V.A."/>
            <person name="Garzon A."/>
            <person name="Thode G."/>
            <person name="Daga R.R."/>
            <person name="Cruzado L."/>
            <person name="Jimenez J."/>
            <person name="Sanchez M."/>
            <person name="del Rey F."/>
            <person name="Benito J."/>
            <person name="Dominguez A."/>
            <person name="Revuelta J.L."/>
            <person name="Moreno S."/>
            <person name="Armstrong J."/>
            <person name="Forsburg S.L."/>
            <person name="Cerutti L."/>
            <person name="Lowe T."/>
            <person name="McCombie W.R."/>
            <person name="Paulsen I."/>
            <person name="Potashkin J."/>
            <person name="Shpakovski G.V."/>
            <person name="Ussery D."/>
            <person name="Barrell B.G."/>
            <person name="Nurse P."/>
        </authorList>
    </citation>
    <scope>NUCLEOTIDE SEQUENCE [LARGE SCALE GENOMIC DNA]</scope>
    <source>
        <strain>972 / ATCC 24843</strain>
    </source>
</reference>
<reference key="2">
    <citation type="journal article" date="2006" name="Nat. Biotechnol.">
        <title>ORFeome cloning and global analysis of protein localization in the fission yeast Schizosaccharomyces pombe.</title>
        <authorList>
            <person name="Matsuyama A."/>
            <person name="Arai R."/>
            <person name="Yashiroda Y."/>
            <person name="Shirai A."/>
            <person name="Kamata A."/>
            <person name="Sekido S."/>
            <person name="Kobayashi Y."/>
            <person name="Hashimoto A."/>
            <person name="Hamamoto M."/>
            <person name="Hiraoka Y."/>
            <person name="Horinouchi S."/>
            <person name="Yoshida M."/>
        </authorList>
    </citation>
    <scope>SUBCELLULAR LOCATION [LARGE SCALE ANALYSIS]</scope>
</reference>
<reference key="3">
    <citation type="journal article" date="2011" name="Biochem. J.">
        <title>The fission yeast Schizosaccharomyces pombe has two distinct tRNase Z(L)s encoded by two different genes and differentially targeted to the nucleus and mitochondria.</title>
        <authorList>
            <person name="Gan X."/>
            <person name="Yang J."/>
            <person name="Li J."/>
            <person name="Yu H."/>
            <person name="Dai H."/>
            <person name="Liu J."/>
            <person name="Huang Y."/>
        </authorList>
    </citation>
    <scope>FUNCTION</scope>
    <scope>SUBCELLULAR LOCATION</scope>
</reference>
<sequence length="678" mass="75987">MKASLLVPRRALLFGQLLPPKYSWYSVKRWQSQLTFRNKSKRNTNRIMLSVVSSLNPDSLIAPLLCVSLDNRKYLIGSMGELTQMKFRSQASNYGGKSVSVFLMPPSLQSLNAWGITAGLFGYLQSSGIQNTWGLHAPKPVISIIKKSHHLFSGSPLRLDLNSFSSEDNADATNSFYLDEPEFCTIKGNIYSNWSFLSFNSKEAAGVFNADKALALGVPFGPSNGKLCAGEAVLSKDGTTWIYPHQVVGPPRKRQYFYVLGCSSLSALNQMSKHVDSFSDVYPTCIIHILEKGIWGPEYIKFLSHPKFSRAQHFISCIELASNNPVFQRNKGRNVLPACRDFAAFDIKPSTLDTQTQLPENTYVLKEETSMVLYDEQCKISESPSYSPVKLAKKFSSFNPLPFENEGYTLDVLGTSATCPTWRRSLSSYSVAIDGTVIMLDCGEGAISQFFRQYGTNTEPMLRKLKAIFITHLHSDHYLGLLNVLQAWNKANTNNSMHINIIGPKFLWQWLQRLKSPANLQALLNRIIFIIAKETVTTPLQLTSDLSISSVPSIHINDSYSCIISHTKYGKLVYSGDTRPNEKLVKAGIGASLLLHESTFEDDLKHEAIQRQHSTASEALSVAQSMKAKALILTHFSQRSYDADFLPPDWTIYPKSKTIYANDGLQWQQFQSKQRETI</sequence>
<proteinExistence type="inferred from homology"/>
<protein>
    <recommendedName>
        <fullName>Ribonuclease Z 2, mitochondrial</fullName>
        <shortName>RNase Z 2</shortName>
        <ecNumber>3.1.26.11</ecNumber>
    </recommendedName>
    <alternativeName>
        <fullName>tRNA 3 endonuclease 2</fullName>
    </alternativeName>
    <alternativeName>
        <fullName>tRNase Z 2</fullName>
    </alternativeName>
</protein>
<keyword id="KW-0963">Cytoplasm</keyword>
<keyword id="KW-0255">Endonuclease</keyword>
<keyword id="KW-0378">Hydrolase</keyword>
<keyword id="KW-0479">Metal-binding</keyword>
<keyword id="KW-0496">Mitochondrion</keyword>
<keyword id="KW-0540">Nuclease</keyword>
<keyword id="KW-1185">Reference proteome</keyword>
<keyword id="KW-0809">Transit peptide</keyword>
<keyword id="KW-0819">tRNA processing</keyword>
<keyword id="KW-0862">Zinc</keyword>
<dbReference type="EC" id="3.1.26.11"/>
<dbReference type="EMBL" id="CU329671">
    <property type="protein sequence ID" value="CAB09123.1"/>
    <property type="molecule type" value="Genomic_DNA"/>
</dbReference>
<dbReference type="PIR" id="T40362">
    <property type="entry name" value="T40362"/>
</dbReference>
<dbReference type="RefSeq" id="NP_595514.1">
    <property type="nucleotide sequence ID" value="NM_001021423.2"/>
</dbReference>
<dbReference type="SMR" id="P87168"/>
<dbReference type="FunCoup" id="P87168">
    <property type="interactions" value="196"/>
</dbReference>
<dbReference type="STRING" id="284812.P87168"/>
<dbReference type="PaxDb" id="4896-SPBC3D6.03c.1"/>
<dbReference type="EnsemblFungi" id="SPBC3D6.03c.1">
    <property type="protein sequence ID" value="SPBC3D6.03c.1:pep"/>
    <property type="gene ID" value="SPBC3D6.03c"/>
</dbReference>
<dbReference type="GeneID" id="2540985"/>
<dbReference type="KEGG" id="spo:2540985"/>
<dbReference type="PomBase" id="SPBC3D6.03c">
    <property type="gene designation" value="trz2"/>
</dbReference>
<dbReference type="VEuPathDB" id="FungiDB:SPBC3D6.03c"/>
<dbReference type="eggNOG" id="KOG2121">
    <property type="taxonomic scope" value="Eukaryota"/>
</dbReference>
<dbReference type="HOGENOM" id="CLU_422817_0_0_1"/>
<dbReference type="InParanoid" id="P87168"/>
<dbReference type="OMA" id="YNPWSAT"/>
<dbReference type="PhylomeDB" id="P87168"/>
<dbReference type="BRENDA" id="3.1.26.11">
    <property type="organism ID" value="5613"/>
</dbReference>
<dbReference type="PRO" id="PR:P87168"/>
<dbReference type="Proteomes" id="UP000002485">
    <property type="component" value="Chromosome II"/>
</dbReference>
<dbReference type="GO" id="GO:0005739">
    <property type="term" value="C:mitochondrion"/>
    <property type="evidence" value="ECO:0000314"/>
    <property type="project" value="PomBase"/>
</dbReference>
<dbReference type="GO" id="GO:0042781">
    <property type="term" value="F:3'-tRNA processing endoribonuclease activity"/>
    <property type="evidence" value="ECO:0000314"/>
    <property type="project" value="PomBase"/>
</dbReference>
<dbReference type="GO" id="GO:0046872">
    <property type="term" value="F:metal ion binding"/>
    <property type="evidence" value="ECO:0007669"/>
    <property type="project" value="UniProtKB-KW"/>
</dbReference>
<dbReference type="GO" id="GO:0140040">
    <property type="term" value="P:mitochondrial polycistronic RNA processing"/>
    <property type="evidence" value="ECO:0000315"/>
    <property type="project" value="PomBase"/>
</dbReference>
<dbReference type="GO" id="GO:1990180">
    <property type="term" value="P:mitochondrial tRNA 3'-end processing"/>
    <property type="evidence" value="ECO:0000315"/>
    <property type="project" value="PomBase"/>
</dbReference>
<dbReference type="GO" id="GO:0042780">
    <property type="term" value="P:tRNA 3'-end processing"/>
    <property type="evidence" value="ECO:0000314"/>
    <property type="project" value="PomBase"/>
</dbReference>
<dbReference type="CDD" id="cd07718">
    <property type="entry name" value="RNaseZ_ELAC1_ELAC2-C-term-like_MBL-fold"/>
    <property type="match status" value="1"/>
</dbReference>
<dbReference type="FunFam" id="3.60.15.10:FF:000157">
    <property type="entry name" value="Ribonuclease Z 2, mitochondrial"/>
    <property type="match status" value="1"/>
</dbReference>
<dbReference type="Gene3D" id="3.60.15.10">
    <property type="entry name" value="Ribonuclease Z/Hydroxyacylglutathione hydrolase-like"/>
    <property type="match status" value="2"/>
</dbReference>
<dbReference type="InterPro" id="IPR001279">
    <property type="entry name" value="Metallo-B-lactamas"/>
</dbReference>
<dbReference type="InterPro" id="IPR036866">
    <property type="entry name" value="RibonucZ/Hydroxyglut_hydro"/>
</dbReference>
<dbReference type="InterPro" id="IPR047151">
    <property type="entry name" value="RNZ2-like"/>
</dbReference>
<dbReference type="InterPro" id="IPR027794">
    <property type="entry name" value="tRNase_Z_dom"/>
</dbReference>
<dbReference type="PANTHER" id="PTHR12553">
    <property type="entry name" value="ZINC PHOSPHODIESTERASE ELAC PROTEIN 2"/>
    <property type="match status" value="1"/>
</dbReference>
<dbReference type="PANTHER" id="PTHR12553:SF49">
    <property type="entry name" value="ZINC PHOSPHODIESTERASE ELAC PROTEIN 2"/>
    <property type="match status" value="1"/>
</dbReference>
<dbReference type="Pfam" id="PF00753">
    <property type="entry name" value="Lactamase_B"/>
    <property type="match status" value="1"/>
</dbReference>
<dbReference type="Pfam" id="PF13691">
    <property type="entry name" value="Lactamase_B_4"/>
    <property type="match status" value="1"/>
</dbReference>
<dbReference type="SMART" id="SM00849">
    <property type="entry name" value="Lactamase_B"/>
    <property type="match status" value="1"/>
</dbReference>
<dbReference type="SUPFAM" id="SSF56281">
    <property type="entry name" value="Metallo-hydrolase/oxidoreductase"/>
    <property type="match status" value="1"/>
</dbReference>